<dbReference type="EC" id="3.5.2.7" evidence="1"/>
<dbReference type="EMBL" id="CP001131">
    <property type="protein sequence ID" value="ACG73587.1"/>
    <property type="molecule type" value="Genomic_DNA"/>
</dbReference>
<dbReference type="RefSeq" id="WP_012526377.1">
    <property type="nucleotide sequence ID" value="NC_011145.1"/>
</dbReference>
<dbReference type="SMR" id="B4UEL6"/>
<dbReference type="KEGG" id="ank:AnaeK_2360"/>
<dbReference type="HOGENOM" id="CLU_041647_1_0_7"/>
<dbReference type="OrthoDB" id="9807210at2"/>
<dbReference type="UniPathway" id="UPA00379">
    <property type="reaction ID" value="UER00551"/>
</dbReference>
<dbReference type="Proteomes" id="UP000001871">
    <property type="component" value="Chromosome"/>
</dbReference>
<dbReference type="GO" id="GO:0005737">
    <property type="term" value="C:cytoplasm"/>
    <property type="evidence" value="ECO:0007669"/>
    <property type="project" value="UniProtKB-SubCell"/>
</dbReference>
<dbReference type="GO" id="GO:0050480">
    <property type="term" value="F:imidazolonepropionase activity"/>
    <property type="evidence" value="ECO:0007669"/>
    <property type="project" value="UniProtKB-UniRule"/>
</dbReference>
<dbReference type="GO" id="GO:0005506">
    <property type="term" value="F:iron ion binding"/>
    <property type="evidence" value="ECO:0007669"/>
    <property type="project" value="UniProtKB-UniRule"/>
</dbReference>
<dbReference type="GO" id="GO:0008270">
    <property type="term" value="F:zinc ion binding"/>
    <property type="evidence" value="ECO:0007669"/>
    <property type="project" value="UniProtKB-UniRule"/>
</dbReference>
<dbReference type="GO" id="GO:0019556">
    <property type="term" value="P:L-histidine catabolic process to glutamate and formamide"/>
    <property type="evidence" value="ECO:0007669"/>
    <property type="project" value="UniProtKB-UniPathway"/>
</dbReference>
<dbReference type="GO" id="GO:0019557">
    <property type="term" value="P:L-histidine catabolic process to glutamate and formate"/>
    <property type="evidence" value="ECO:0007669"/>
    <property type="project" value="UniProtKB-UniPathway"/>
</dbReference>
<dbReference type="Gene3D" id="3.20.20.140">
    <property type="entry name" value="Metal-dependent hydrolases"/>
    <property type="match status" value="1"/>
</dbReference>
<dbReference type="Gene3D" id="2.30.40.10">
    <property type="entry name" value="Urease, subunit C, domain 1"/>
    <property type="match status" value="1"/>
</dbReference>
<dbReference type="HAMAP" id="MF_00372">
    <property type="entry name" value="HutI"/>
    <property type="match status" value="1"/>
</dbReference>
<dbReference type="InterPro" id="IPR006680">
    <property type="entry name" value="Amidohydro-rel"/>
</dbReference>
<dbReference type="InterPro" id="IPR005920">
    <property type="entry name" value="HutI"/>
</dbReference>
<dbReference type="InterPro" id="IPR011059">
    <property type="entry name" value="Metal-dep_hydrolase_composite"/>
</dbReference>
<dbReference type="InterPro" id="IPR032466">
    <property type="entry name" value="Metal_Hydrolase"/>
</dbReference>
<dbReference type="NCBIfam" id="TIGR01224">
    <property type="entry name" value="hutI"/>
    <property type="match status" value="1"/>
</dbReference>
<dbReference type="PANTHER" id="PTHR42752">
    <property type="entry name" value="IMIDAZOLONEPROPIONASE"/>
    <property type="match status" value="1"/>
</dbReference>
<dbReference type="PANTHER" id="PTHR42752:SF1">
    <property type="entry name" value="IMIDAZOLONEPROPIONASE-RELATED"/>
    <property type="match status" value="1"/>
</dbReference>
<dbReference type="Pfam" id="PF01979">
    <property type="entry name" value="Amidohydro_1"/>
    <property type="match status" value="1"/>
</dbReference>
<dbReference type="SUPFAM" id="SSF51338">
    <property type="entry name" value="Composite domain of metallo-dependent hydrolases"/>
    <property type="match status" value="1"/>
</dbReference>
<dbReference type="SUPFAM" id="SSF51556">
    <property type="entry name" value="Metallo-dependent hydrolases"/>
    <property type="match status" value="1"/>
</dbReference>
<gene>
    <name evidence="1" type="primary">hutI</name>
    <name type="ordered locus">AnaeK_2360</name>
</gene>
<reference key="1">
    <citation type="submission" date="2008-08" db="EMBL/GenBank/DDBJ databases">
        <title>Complete sequence of Anaeromyxobacter sp. K.</title>
        <authorList>
            <consortium name="US DOE Joint Genome Institute"/>
            <person name="Lucas S."/>
            <person name="Copeland A."/>
            <person name="Lapidus A."/>
            <person name="Glavina del Rio T."/>
            <person name="Dalin E."/>
            <person name="Tice H."/>
            <person name="Bruce D."/>
            <person name="Goodwin L."/>
            <person name="Pitluck S."/>
            <person name="Saunders E."/>
            <person name="Brettin T."/>
            <person name="Detter J.C."/>
            <person name="Han C."/>
            <person name="Larimer F."/>
            <person name="Land M."/>
            <person name="Hauser L."/>
            <person name="Kyrpides N."/>
            <person name="Ovchinnikiva G."/>
            <person name="Beliaev A."/>
        </authorList>
    </citation>
    <scope>NUCLEOTIDE SEQUENCE [LARGE SCALE GENOMIC DNA]</scope>
    <source>
        <strain>K</strain>
    </source>
</reference>
<organism>
    <name type="scientific">Anaeromyxobacter sp. (strain K)</name>
    <dbReference type="NCBI Taxonomy" id="447217"/>
    <lineage>
        <taxon>Bacteria</taxon>
        <taxon>Pseudomonadati</taxon>
        <taxon>Myxococcota</taxon>
        <taxon>Myxococcia</taxon>
        <taxon>Myxococcales</taxon>
        <taxon>Cystobacterineae</taxon>
        <taxon>Anaeromyxobacteraceae</taxon>
        <taxon>Anaeromyxobacter</taxon>
    </lineage>
</organism>
<evidence type="ECO:0000255" key="1">
    <source>
        <dbReference type="HAMAP-Rule" id="MF_00372"/>
    </source>
</evidence>
<name>HUTI_ANASK</name>
<keyword id="KW-0963">Cytoplasm</keyword>
<keyword id="KW-0369">Histidine metabolism</keyword>
<keyword id="KW-0378">Hydrolase</keyword>
<keyword id="KW-0408">Iron</keyword>
<keyword id="KW-0479">Metal-binding</keyword>
<keyword id="KW-0862">Zinc</keyword>
<sequence length="421" mass="43645">MSRPTATLVLRNAVVATCDRGPSDAGLLPGAAVAVEGRRVAWVGRDRDLEAEVNAGGAQVIDARGGLVTPGLVDSHTHLVFAGERAGEFALRCAGRSYLQVALSGGGIAVTTRATRAAPDEQLLADAAARARRLIAQGVTTIEVKSGYGLDAPEELRLLRIVHRLGDALGGDATILPTLLFHAVPPEQVGDRAGFVREACASLIPQVARERLAGFCDVFVEDGAFAPDEARLLLQAAKDRGLVPRVHAEQLTAGGGARLAAELGCSSADHLEELDDAGVAALAEARVVAGLLPLSTLFLGSERYAPARRLLEAGVPVSLATNMNPGSAMSENVGLTLSLACLKLGLTPAEALVAFTAGGARALRQPDLGRIARGADADLVLWGCGSPEHLAWHMAVNHALAVVKHGRVVHQAPAVAMVDCR</sequence>
<proteinExistence type="inferred from homology"/>
<accession>B4UEL6</accession>
<comment type="function">
    <text evidence="1">Catalyzes the hydrolytic cleavage of the carbon-nitrogen bond in imidazolone-5-propanoate to yield N-formimidoyl-L-glutamate. It is the third step in the universal histidine degradation pathway.</text>
</comment>
<comment type="catalytic activity">
    <reaction evidence="1">
        <text>4-imidazolone-5-propanoate + H2O = N-formimidoyl-L-glutamate</text>
        <dbReference type="Rhea" id="RHEA:23660"/>
        <dbReference type="ChEBI" id="CHEBI:15377"/>
        <dbReference type="ChEBI" id="CHEBI:58928"/>
        <dbReference type="ChEBI" id="CHEBI:77893"/>
        <dbReference type="EC" id="3.5.2.7"/>
    </reaction>
</comment>
<comment type="cofactor">
    <cofactor evidence="1">
        <name>Zn(2+)</name>
        <dbReference type="ChEBI" id="CHEBI:29105"/>
    </cofactor>
    <cofactor evidence="1">
        <name>Fe(3+)</name>
        <dbReference type="ChEBI" id="CHEBI:29034"/>
    </cofactor>
    <text evidence="1">Binds 1 zinc or iron ion per subunit.</text>
</comment>
<comment type="pathway">
    <text evidence="1">Amino-acid degradation; L-histidine degradation into L-glutamate; N-formimidoyl-L-glutamate from L-histidine: step 3/3.</text>
</comment>
<comment type="subcellular location">
    <subcellularLocation>
        <location evidence="1">Cytoplasm</location>
    </subcellularLocation>
</comment>
<comment type="similarity">
    <text evidence="1">Belongs to the metallo-dependent hydrolases superfamily. HutI family.</text>
</comment>
<protein>
    <recommendedName>
        <fullName evidence="1">Imidazolonepropionase</fullName>
        <ecNumber evidence="1">3.5.2.7</ecNumber>
    </recommendedName>
    <alternativeName>
        <fullName evidence="1">Imidazolone-5-propionate hydrolase</fullName>
    </alternativeName>
</protein>
<feature type="chain" id="PRO_1000121528" description="Imidazolonepropionase">
    <location>
        <begin position="1"/>
        <end position="421"/>
    </location>
</feature>
<feature type="binding site" evidence="1">
    <location>
        <position position="76"/>
    </location>
    <ligand>
        <name>Fe(3+)</name>
        <dbReference type="ChEBI" id="CHEBI:29034"/>
    </ligand>
</feature>
<feature type="binding site" evidence="1">
    <location>
        <position position="76"/>
    </location>
    <ligand>
        <name>Zn(2+)</name>
        <dbReference type="ChEBI" id="CHEBI:29105"/>
    </ligand>
</feature>
<feature type="binding site" evidence="1">
    <location>
        <position position="78"/>
    </location>
    <ligand>
        <name>Fe(3+)</name>
        <dbReference type="ChEBI" id="CHEBI:29034"/>
    </ligand>
</feature>
<feature type="binding site" evidence="1">
    <location>
        <position position="78"/>
    </location>
    <ligand>
        <name>Zn(2+)</name>
        <dbReference type="ChEBI" id="CHEBI:29105"/>
    </ligand>
</feature>
<feature type="binding site" evidence="1">
    <location>
        <position position="85"/>
    </location>
    <ligand>
        <name>4-imidazolone-5-propanoate</name>
        <dbReference type="ChEBI" id="CHEBI:77893"/>
    </ligand>
</feature>
<feature type="binding site" evidence="1">
    <location>
        <position position="148"/>
    </location>
    <ligand>
        <name>4-imidazolone-5-propanoate</name>
        <dbReference type="ChEBI" id="CHEBI:77893"/>
    </ligand>
</feature>
<feature type="binding site" evidence="1">
    <location>
        <position position="148"/>
    </location>
    <ligand>
        <name>N-formimidoyl-L-glutamate</name>
        <dbReference type="ChEBI" id="CHEBI:58928"/>
    </ligand>
</feature>
<feature type="binding site" evidence="1">
    <location>
        <position position="182"/>
    </location>
    <ligand>
        <name>4-imidazolone-5-propanoate</name>
        <dbReference type="ChEBI" id="CHEBI:77893"/>
    </ligand>
</feature>
<feature type="binding site" evidence="1">
    <location>
        <position position="247"/>
    </location>
    <ligand>
        <name>Fe(3+)</name>
        <dbReference type="ChEBI" id="CHEBI:29034"/>
    </ligand>
</feature>
<feature type="binding site" evidence="1">
    <location>
        <position position="247"/>
    </location>
    <ligand>
        <name>Zn(2+)</name>
        <dbReference type="ChEBI" id="CHEBI:29105"/>
    </ligand>
</feature>
<feature type="binding site" evidence="1">
    <location>
        <position position="250"/>
    </location>
    <ligand>
        <name>4-imidazolone-5-propanoate</name>
        <dbReference type="ChEBI" id="CHEBI:77893"/>
    </ligand>
</feature>
<feature type="binding site" evidence="1">
    <location>
        <position position="324"/>
    </location>
    <ligand>
        <name>N-formimidoyl-L-glutamate</name>
        <dbReference type="ChEBI" id="CHEBI:58928"/>
    </ligand>
</feature>
<feature type="binding site" evidence="1">
    <location>
        <position position="326"/>
    </location>
    <ligand>
        <name>N-formimidoyl-L-glutamate</name>
        <dbReference type="ChEBI" id="CHEBI:58928"/>
    </ligand>
</feature>
<feature type="binding site" evidence="1">
    <location>
        <position position="327"/>
    </location>
    <ligand>
        <name>4-imidazolone-5-propanoate</name>
        <dbReference type="ChEBI" id="CHEBI:77893"/>
    </ligand>
</feature>